<keyword id="KW-0150">Chloroplast</keyword>
<keyword id="KW-0249">Electron transport</keyword>
<keyword id="KW-0472">Membrane</keyword>
<keyword id="KW-0602">Photosynthesis</keyword>
<keyword id="KW-0934">Plastid</keyword>
<keyword id="KW-0793">Thylakoid</keyword>
<keyword id="KW-0812">Transmembrane</keyword>
<keyword id="KW-1133">Transmembrane helix</keyword>
<keyword id="KW-0813">Transport</keyword>
<geneLocation type="chloroplast"/>
<feature type="chain" id="PRO_0000217115" description="Cytochrome b6-f complex subunit 8">
    <location>
        <begin position="1"/>
        <end position="29"/>
    </location>
</feature>
<feature type="transmembrane region" description="Helical" evidence="2">
    <location>
        <begin position="3"/>
        <end position="23"/>
    </location>
</feature>
<sequence>MDIISLGWVFLMVFFSFSLSLVVWARNGL</sequence>
<protein>
    <recommendedName>
        <fullName>Cytochrome b6-f complex subunit 8</fullName>
    </recommendedName>
    <alternativeName>
        <fullName>Cytochrome b6-f complex subunit PetN</fullName>
    </alternativeName>
    <alternativeName>
        <fullName>Cytochrome b6-f complex subunit VIII</fullName>
    </alternativeName>
</protein>
<comment type="function">
    <text evidence="1">Component of the cytochrome b6-f complex, which mediates electron transfer between photosystem II (PSII) and photosystem I (PSI), cyclic electron flow around PSI, and state transitions.</text>
</comment>
<comment type="subunit">
    <text evidence="1">The 4 large subunits of the cytochrome b6-f complex are cytochrome b6, subunit IV (17 kDa polypeptide, PetD), cytochrome f and the Rieske protein, while the 4 small subunits are PetG, PetL, PetM and PetN. The complex functions as a dimer (By similarity).</text>
</comment>
<comment type="subcellular location">
    <subcellularLocation>
        <location evidence="1">Plastid</location>
        <location evidence="1">Chloroplast thylakoid membrane</location>
        <topology evidence="1">Single-pass membrane protein</topology>
    </subcellularLocation>
</comment>
<comment type="similarity">
    <text evidence="3">Belongs to the PetN family.</text>
</comment>
<gene>
    <name type="primary">petN</name>
    <name type="synonym">ycf6</name>
</gene>
<dbReference type="EMBL" id="AF166114">
    <property type="protein sequence ID" value="AAF43827.1"/>
    <property type="molecule type" value="Genomic_DNA"/>
</dbReference>
<dbReference type="RefSeq" id="NP_038386.1">
    <property type="nucleotide sequence ID" value="NC_002186.1"/>
</dbReference>
<dbReference type="SMR" id="Q9MUS4"/>
<dbReference type="GeneID" id="800963"/>
<dbReference type="GO" id="GO:0009535">
    <property type="term" value="C:chloroplast thylakoid membrane"/>
    <property type="evidence" value="ECO:0007669"/>
    <property type="project" value="UniProtKB-SubCell"/>
</dbReference>
<dbReference type="GO" id="GO:0009512">
    <property type="term" value="C:cytochrome b6f complex"/>
    <property type="evidence" value="ECO:0007669"/>
    <property type="project" value="InterPro"/>
</dbReference>
<dbReference type="GO" id="GO:0045158">
    <property type="term" value="F:electron transporter, transferring electrons within cytochrome b6/f complex of photosystem II activity"/>
    <property type="evidence" value="ECO:0007669"/>
    <property type="project" value="InterPro"/>
</dbReference>
<dbReference type="GO" id="GO:0017004">
    <property type="term" value="P:cytochrome complex assembly"/>
    <property type="evidence" value="ECO:0007669"/>
    <property type="project" value="UniProtKB-UniRule"/>
</dbReference>
<dbReference type="GO" id="GO:0015979">
    <property type="term" value="P:photosynthesis"/>
    <property type="evidence" value="ECO:0007669"/>
    <property type="project" value="UniProtKB-KW"/>
</dbReference>
<dbReference type="HAMAP" id="MF_00395">
    <property type="entry name" value="Cytb6_f_PetN"/>
    <property type="match status" value="1"/>
</dbReference>
<dbReference type="InterPro" id="IPR036143">
    <property type="entry name" value="Cytochr_b6-f_cplx_su8_sf"/>
</dbReference>
<dbReference type="InterPro" id="IPR005497">
    <property type="entry name" value="Cytochrome_b6-f_cplx_su8"/>
</dbReference>
<dbReference type="Pfam" id="PF03742">
    <property type="entry name" value="PetN"/>
    <property type="match status" value="1"/>
</dbReference>
<dbReference type="SUPFAM" id="SSF103451">
    <property type="entry name" value="PetN subunit of the cytochrome b6f complex"/>
    <property type="match status" value="1"/>
</dbReference>
<accession>Q9MUS4</accession>
<organism>
    <name type="scientific">Mesostigma viride</name>
    <name type="common">Green alga</name>
    <dbReference type="NCBI Taxonomy" id="41882"/>
    <lineage>
        <taxon>Eukaryota</taxon>
        <taxon>Viridiplantae</taxon>
        <taxon>Streptophyta</taxon>
        <taxon>Mesostigmatophyceae</taxon>
        <taxon>Mesostigmatales</taxon>
        <taxon>Mesostigmataceae</taxon>
        <taxon>Mesostigma</taxon>
    </lineage>
</organism>
<name>PETN_MESVI</name>
<reference key="1">
    <citation type="journal article" date="2000" name="Nature">
        <title>Ancestral chloroplast genome in Mesostigma viride reveals an early branch of green plant evolution.</title>
        <authorList>
            <person name="Lemieux C."/>
            <person name="Otis C."/>
            <person name="Turmel M."/>
        </authorList>
    </citation>
    <scope>NUCLEOTIDE SEQUENCE [LARGE SCALE GENOMIC DNA]</scope>
    <source>
        <strain>NIES-296 / KY-14 / CCMP 2046</strain>
    </source>
</reference>
<proteinExistence type="inferred from homology"/>
<evidence type="ECO:0000250" key="1"/>
<evidence type="ECO:0000255" key="2"/>
<evidence type="ECO:0000305" key="3"/>